<gene>
    <name evidence="1" type="primary">metK</name>
    <name type="synonym">metX</name>
    <name type="ordered locus">WS1994</name>
</gene>
<feature type="chain" id="PRO_0000174625" description="S-adenosylmethionine synthase">
    <location>
        <begin position="1"/>
        <end position="386"/>
    </location>
</feature>
<feature type="region of interest" description="Flexible loop" evidence="1">
    <location>
        <begin position="100"/>
        <end position="110"/>
    </location>
</feature>
<feature type="binding site" description="in other chain" evidence="1">
    <location>
        <position position="16"/>
    </location>
    <ligand>
        <name>ATP</name>
        <dbReference type="ChEBI" id="CHEBI:30616"/>
        <note>ligand shared between two neighboring subunits</note>
    </ligand>
</feature>
<feature type="binding site" evidence="1">
    <location>
        <position position="18"/>
    </location>
    <ligand>
        <name>Mg(2+)</name>
        <dbReference type="ChEBI" id="CHEBI:18420"/>
    </ligand>
</feature>
<feature type="binding site" evidence="1">
    <location>
        <position position="44"/>
    </location>
    <ligand>
        <name>K(+)</name>
        <dbReference type="ChEBI" id="CHEBI:29103"/>
    </ligand>
</feature>
<feature type="binding site" description="in other chain" evidence="1">
    <location>
        <position position="57"/>
    </location>
    <ligand>
        <name>L-methionine</name>
        <dbReference type="ChEBI" id="CHEBI:57844"/>
        <note>ligand shared between two neighboring subunits</note>
    </ligand>
</feature>
<feature type="binding site" description="in other chain" evidence="1">
    <location>
        <position position="100"/>
    </location>
    <ligand>
        <name>L-methionine</name>
        <dbReference type="ChEBI" id="CHEBI:57844"/>
        <note>ligand shared between two neighboring subunits</note>
    </ligand>
</feature>
<feature type="binding site" description="in other chain" evidence="1">
    <location>
        <begin position="164"/>
        <end position="166"/>
    </location>
    <ligand>
        <name>ATP</name>
        <dbReference type="ChEBI" id="CHEBI:30616"/>
        <note>ligand shared between two neighboring subunits</note>
    </ligand>
</feature>
<feature type="binding site" description="in other chain" evidence="1">
    <location>
        <begin position="230"/>
        <end position="231"/>
    </location>
    <ligand>
        <name>ATP</name>
        <dbReference type="ChEBI" id="CHEBI:30616"/>
        <note>ligand shared between two neighboring subunits</note>
    </ligand>
</feature>
<feature type="binding site" evidence="1">
    <location>
        <position position="239"/>
    </location>
    <ligand>
        <name>ATP</name>
        <dbReference type="ChEBI" id="CHEBI:30616"/>
        <note>ligand shared between two neighboring subunits</note>
    </ligand>
</feature>
<feature type="binding site" evidence="1">
    <location>
        <position position="239"/>
    </location>
    <ligand>
        <name>L-methionine</name>
        <dbReference type="ChEBI" id="CHEBI:57844"/>
        <note>ligand shared between two neighboring subunits</note>
    </ligand>
</feature>
<feature type="binding site" description="in other chain" evidence="1">
    <location>
        <begin position="245"/>
        <end position="246"/>
    </location>
    <ligand>
        <name>ATP</name>
        <dbReference type="ChEBI" id="CHEBI:30616"/>
        <note>ligand shared between two neighboring subunits</note>
    </ligand>
</feature>
<feature type="binding site" evidence="1">
    <location>
        <position position="262"/>
    </location>
    <ligand>
        <name>ATP</name>
        <dbReference type="ChEBI" id="CHEBI:30616"/>
        <note>ligand shared between two neighboring subunits</note>
    </ligand>
</feature>
<feature type="binding site" evidence="1">
    <location>
        <position position="266"/>
    </location>
    <ligand>
        <name>ATP</name>
        <dbReference type="ChEBI" id="CHEBI:30616"/>
        <note>ligand shared between two neighboring subunits</note>
    </ligand>
</feature>
<feature type="binding site" description="in other chain" evidence="1">
    <location>
        <position position="270"/>
    </location>
    <ligand>
        <name>L-methionine</name>
        <dbReference type="ChEBI" id="CHEBI:57844"/>
        <note>ligand shared between two neighboring subunits</note>
    </ligand>
</feature>
<organism>
    <name type="scientific">Wolinella succinogenes (strain ATCC 29543 / DSM 1740 / CCUG 13145 / JCM 31913 / LMG 7466 / NCTC 11488 / FDC 602W)</name>
    <name type="common">Vibrio succinogenes</name>
    <dbReference type="NCBI Taxonomy" id="273121"/>
    <lineage>
        <taxon>Bacteria</taxon>
        <taxon>Pseudomonadati</taxon>
        <taxon>Campylobacterota</taxon>
        <taxon>Epsilonproteobacteria</taxon>
        <taxon>Campylobacterales</taxon>
        <taxon>Helicobacteraceae</taxon>
        <taxon>Wolinella</taxon>
    </lineage>
</organism>
<name>METK_WOLSU</name>
<comment type="function">
    <text evidence="1">Catalyzes the formation of S-adenosylmethionine (AdoMet) from methionine and ATP. The overall synthetic reaction is composed of two sequential steps, AdoMet formation and the subsequent tripolyphosphate hydrolysis which occurs prior to release of AdoMet from the enzyme.</text>
</comment>
<comment type="catalytic activity">
    <reaction evidence="1">
        <text>L-methionine + ATP + H2O = S-adenosyl-L-methionine + phosphate + diphosphate</text>
        <dbReference type="Rhea" id="RHEA:21080"/>
        <dbReference type="ChEBI" id="CHEBI:15377"/>
        <dbReference type="ChEBI" id="CHEBI:30616"/>
        <dbReference type="ChEBI" id="CHEBI:33019"/>
        <dbReference type="ChEBI" id="CHEBI:43474"/>
        <dbReference type="ChEBI" id="CHEBI:57844"/>
        <dbReference type="ChEBI" id="CHEBI:59789"/>
        <dbReference type="EC" id="2.5.1.6"/>
    </reaction>
</comment>
<comment type="cofactor">
    <cofactor evidence="1">
        <name>Mg(2+)</name>
        <dbReference type="ChEBI" id="CHEBI:18420"/>
    </cofactor>
    <text evidence="1">Binds 2 divalent ions per subunit.</text>
</comment>
<comment type="cofactor">
    <cofactor evidence="1">
        <name>K(+)</name>
        <dbReference type="ChEBI" id="CHEBI:29103"/>
    </cofactor>
    <text evidence="1">Binds 1 potassium ion per subunit.</text>
</comment>
<comment type="pathway">
    <text evidence="1">Amino-acid biosynthesis; S-adenosyl-L-methionine biosynthesis; S-adenosyl-L-methionine from L-methionine: step 1/1.</text>
</comment>
<comment type="subunit">
    <text evidence="1">Homotetramer; dimer of dimers.</text>
</comment>
<comment type="subcellular location">
    <subcellularLocation>
        <location evidence="1">Cytoplasm</location>
    </subcellularLocation>
</comment>
<comment type="similarity">
    <text evidence="1">Belongs to the AdoMet synthase family.</text>
</comment>
<protein>
    <recommendedName>
        <fullName evidence="1">S-adenosylmethionine synthase</fullName>
        <shortName evidence="1">AdoMet synthase</shortName>
        <ecNumber evidence="1">2.5.1.6</ecNumber>
    </recommendedName>
    <alternativeName>
        <fullName evidence="1">MAT</fullName>
    </alternativeName>
    <alternativeName>
        <fullName evidence="1">Methionine adenosyltransferase</fullName>
    </alternativeName>
</protein>
<keyword id="KW-0067">ATP-binding</keyword>
<keyword id="KW-0963">Cytoplasm</keyword>
<keyword id="KW-0460">Magnesium</keyword>
<keyword id="KW-0479">Metal-binding</keyword>
<keyword id="KW-0547">Nucleotide-binding</keyword>
<keyword id="KW-0554">One-carbon metabolism</keyword>
<keyword id="KW-0630">Potassium</keyword>
<keyword id="KW-1185">Reference proteome</keyword>
<keyword id="KW-0808">Transferase</keyword>
<evidence type="ECO:0000255" key="1">
    <source>
        <dbReference type="HAMAP-Rule" id="MF_00086"/>
    </source>
</evidence>
<sequence>MRKEFLFTSESVTEGHPDKMADQISDAILDYIIERDPKARVACETLLSNGFCVIAGELKTTTYAPMQEIAREVIREIGYTDALYGFDYRSAGILNGVGEQSPDINQGVDREDGEIGAGDQGLMFGYACRETETLMPLPIFLSHKITEGLAKARKDGTLPFLRPDGKSQVTVRYVDGKPVGIDTIVVSTQHAPDVSQERLRDAVIEEIVYKVLPKEYLGDDIRFFVNPTGKFVIGGPQGDAGLTGRKIIVDSYGGSCPHGGGAFSGKDPSKVDRSGAYAARYVAKNLVASGVCDKATIQIAYAIGVVEPVSILVDTHGTGKVEDDQLETCVRQLFRLTPKGIIESLDLLRPIYKKTASYGHFGRELPEFSWEKTDKAELIKNYFNLK</sequence>
<proteinExistence type="inferred from homology"/>
<dbReference type="EC" id="2.5.1.6" evidence="1"/>
<dbReference type="EMBL" id="BX571662">
    <property type="protein sequence ID" value="CAE10996.1"/>
    <property type="molecule type" value="Genomic_DNA"/>
</dbReference>
<dbReference type="RefSeq" id="WP_011139778.1">
    <property type="nucleotide sequence ID" value="NC_005090.1"/>
</dbReference>
<dbReference type="SMR" id="Q7M7Z2"/>
<dbReference type="STRING" id="273121.WS1994"/>
<dbReference type="KEGG" id="wsu:WS1994"/>
<dbReference type="eggNOG" id="COG0192">
    <property type="taxonomic scope" value="Bacteria"/>
</dbReference>
<dbReference type="HOGENOM" id="CLU_041802_1_1_7"/>
<dbReference type="UniPathway" id="UPA00315">
    <property type="reaction ID" value="UER00080"/>
</dbReference>
<dbReference type="Proteomes" id="UP000000422">
    <property type="component" value="Chromosome"/>
</dbReference>
<dbReference type="GO" id="GO:0005737">
    <property type="term" value="C:cytoplasm"/>
    <property type="evidence" value="ECO:0007669"/>
    <property type="project" value="UniProtKB-SubCell"/>
</dbReference>
<dbReference type="GO" id="GO:0005524">
    <property type="term" value="F:ATP binding"/>
    <property type="evidence" value="ECO:0007669"/>
    <property type="project" value="UniProtKB-UniRule"/>
</dbReference>
<dbReference type="GO" id="GO:0000287">
    <property type="term" value="F:magnesium ion binding"/>
    <property type="evidence" value="ECO:0007669"/>
    <property type="project" value="UniProtKB-UniRule"/>
</dbReference>
<dbReference type="GO" id="GO:0004478">
    <property type="term" value="F:methionine adenosyltransferase activity"/>
    <property type="evidence" value="ECO:0007669"/>
    <property type="project" value="UniProtKB-UniRule"/>
</dbReference>
<dbReference type="GO" id="GO:0006730">
    <property type="term" value="P:one-carbon metabolic process"/>
    <property type="evidence" value="ECO:0007669"/>
    <property type="project" value="UniProtKB-KW"/>
</dbReference>
<dbReference type="GO" id="GO:0006556">
    <property type="term" value="P:S-adenosylmethionine biosynthetic process"/>
    <property type="evidence" value="ECO:0007669"/>
    <property type="project" value="UniProtKB-UniRule"/>
</dbReference>
<dbReference type="CDD" id="cd18079">
    <property type="entry name" value="S-AdoMet_synt"/>
    <property type="match status" value="1"/>
</dbReference>
<dbReference type="FunFam" id="3.30.300.10:FF:000003">
    <property type="entry name" value="S-adenosylmethionine synthase"/>
    <property type="match status" value="1"/>
</dbReference>
<dbReference type="Gene3D" id="3.30.300.10">
    <property type="match status" value="3"/>
</dbReference>
<dbReference type="HAMAP" id="MF_00086">
    <property type="entry name" value="S_AdoMet_synth1"/>
    <property type="match status" value="1"/>
</dbReference>
<dbReference type="InterPro" id="IPR022631">
    <property type="entry name" value="ADOMET_SYNTHASE_CS"/>
</dbReference>
<dbReference type="InterPro" id="IPR022630">
    <property type="entry name" value="S-AdoMet_synt_C"/>
</dbReference>
<dbReference type="InterPro" id="IPR022629">
    <property type="entry name" value="S-AdoMet_synt_central"/>
</dbReference>
<dbReference type="InterPro" id="IPR022628">
    <property type="entry name" value="S-AdoMet_synt_N"/>
</dbReference>
<dbReference type="InterPro" id="IPR002133">
    <property type="entry name" value="S-AdoMet_synthetase"/>
</dbReference>
<dbReference type="InterPro" id="IPR022636">
    <property type="entry name" value="S-AdoMet_synthetase_sfam"/>
</dbReference>
<dbReference type="NCBIfam" id="TIGR01034">
    <property type="entry name" value="metK"/>
    <property type="match status" value="1"/>
</dbReference>
<dbReference type="PANTHER" id="PTHR11964">
    <property type="entry name" value="S-ADENOSYLMETHIONINE SYNTHETASE"/>
    <property type="match status" value="1"/>
</dbReference>
<dbReference type="Pfam" id="PF02773">
    <property type="entry name" value="S-AdoMet_synt_C"/>
    <property type="match status" value="1"/>
</dbReference>
<dbReference type="Pfam" id="PF02772">
    <property type="entry name" value="S-AdoMet_synt_M"/>
    <property type="match status" value="1"/>
</dbReference>
<dbReference type="Pfam" id="PF00438">
    <property type="entry name" value="S-AdoMet_synt_N"/>
    <property type="match status" value="1"/>
</dbReference>
<dbReference type="PIRSF" id="PIRSF000497">
    <property type="entry name" value="MAT"/>
    <property type="match status" value="1"/>
</dbReference>
<dbReference type="SUPFAM" id="SSF55973">
    <property type="entry name" value="S-adenosylmethionine synthetase"/>
    <property type="match status" value="3"/>
</dbReference>
<dbReference type="PROSITE" id="PS00376">
    <property type="entry name" value="ADOMET_SYNTHASE_1"/>
    <property type="match status" value="1"/>
</dbReference>
<dbReference type="PROSITE" id="PS00377">
    <property type="entry name" value="ADOMET_SYNTHASE_2"/>
    <property type="match status" value="1"/>
</dbReference>
<reference key="1">
    <citation type="journal article" date="2003" name="Proc. Natl. Acad. Sci. U.S.A.">
        <title>Complete genome sequence and analysis of Wolinella succinogenes.</title>
        <authorList>
            <person name="Baar C."/>
            <person name="Eppinger M."/>
            <person name="Raddatz G."/>
            <person name="Simon J."/>
            <person name="Lanz C."/>
            <person name="Klimmek O."/>
            <person name="Nandakumar R."/>
            <person name="Gross R."/>
            <person name="Rosinus A."/>
            <person name="Keller H."/>
            <person name="Jagtap P."/>
            <person name="Linke B."/>
            <person name="Meyer F."/>
            <person name="Lederer H."/>
            <person name="Schuster S.C."/>
        </authorList>
    </citation>
    <scope>NUCLEOTIDE SEQUENCE [LARGE SCALE GENOMIC DNA]</scope>
    <source>
        <strain>ATCC 29543 / DSM 1740 / CCUG 13145 / JCM 31913 / LMG 7466 / NCTC 11488 / FDC 602W</strain>
    </source>
</reference>
<accession>Q7M7Z2</accession>